<sequence>MGFEWGFKPSSKITQSTVSSQGTGNVMIPTAGVKQKRRYANEEQEEEELPRNKNVMKYGGVSKRRPQPGSLIRGQPLPLQRGMELMNKNQLQQLLVDLMTKHPEIQQSVHTRVIGLDFSIQKCLDMLKQKSEAVYQSIPYNRSYESNKLDDYAFVRMKPQILEFLNCLVDFILDNIPPRLENLHASLKFLDICTELVIKLPRFELASNNYYYDKCIEQLSHVWCTLIEHVARDRIILLADNSSVWKSHMTRLQVYNEHSNGLLERPLQLFKSLDMGSPSAASSSTLSLQESIIYHHDTMTANENNNNSGSAATDSPFN</sequence>
<feature type="chain" id="PRO_0000409442" description="Tethering factor for nuclear proteasome STS1">
    <location>
        <begin position="1"/>
        <end position="318"/>
    </location>
</feature>
<feature type="region of interest" description="Disordered" evidence="2">
    <location>
        <begin position="1"/>
        <end position="75"/>
    </location>
</feature>
<feature type="compositionally biased region" description="Polar residues" evidence="2">
    <location>
        <begin position="11"/>
        <end position="24"/>
    </location>
</feature>
<reference key="1">
    <citation type="journal article" date="2011" name="PLoS Genet.">
        <title>Whole-genome comparison reveals novel genetic elements that characterize the genome of industrial strains of Saccharomyces cerevisiae.</title>
        <authorList>
            <person name="Borneman A.R."/>
            <person name="Desany B.A."/>
            <person name="Riches D."/>
            <person name="Affourtit J.P."/>
            <person name="Forgan A.H."/>
            <person name="Pretorius I.S."/>
            <person name="Egholm M."/>
            <person name="Chambers P.J."/>
        </authorList>
    </citation>
    <scope>NUCLEOTIDE SEQUENCE [LARGE SCALE GENOMIC DNA]</scope>
    <source>
        <strain>VIN 13</strain>
    </source>
</reference>
<organism>
    <name type="scientific">Saccharomyces cerevisiae (strain VIN 13)</name>
    <name type="common">Baker's yeast</name>
    <dbReference type="NCBI Taxonomy" id="764099"/>
    <lineage>
        <taxon>Eukaryota</taxon>
        <taxon>Fungi</taxon>
        <taxon>Dikarya</taxon>
        <taxon>Ascomycota</taxon>
        <taxon>Saccharomycotina</taxon>
        <taxon>Saccharomycetes</taxon>
        <taxon>Saccharomycetales</taxon>
        <taxon>Saccharomycetaceae</taxon>
        <taxon>Saccharomyces</taxon>
    </lineage>
</organism>
<accession>E7LVV3</accession>
<gene>
    <name type="primary">STS1</name>
    <name type="synonym">DBF8</name>
    <name type="synonym">SSM5</name>
    <name type="ORF">VIN13_2405</name>
</gene>
<name>STS1_YEASV</name>
<dbReference type="EMBL" id="ADXC01000043">
    <property type="protein sequence ID" value="EGA78485.1"/>
    <property type="molecule type" value="Genomic_DNA"/>
</dbReference>
<dbReference type="SMR" id="E7LVV3"/>
<dbReference type="HOGENOM" id="CLU_054606_1_0_1"/>
<dbReference type="OMA" id="DYTPHFL"/>
<dbReference type="OrthoDB" id="28232at4893"/>
<dbReference type="GO" id="GO:0005737">
    <property type="term" value="C:cytoplasm"/>
    <property type="evidence" value="ECO:0007669"/>
    <property type="project" value="UniProtKB-SubCell"/>
</dbReference>
<dbReference type="GO" id="GO:0031965">
    <property type="term" value="C:nuclear membrane"/>
    <property type="evidence" value="ECO:0007669"/>
    <property type="project" value="TreeGrafter"/>
</dbReference>
<dbReference type="GO" id="GO:0070628">
    <property type="term" value="F:proteasome binding"/>
    <property type="evidence" value="ECO:0007669"/>
    <property type="project" value="TreeGrafter"/>
</dbReference>
<dbReference type="GO" id="GO:0071630">
    <property type="term" value="P:nuclear protein quality control by the ubiquitin-proteasome system"/>
    <property type="evidence" value="ECO:0007669"/>
    <property type="project" value="InterPro"/>
</dbReference>
<dbReference type="GO" id="GO:0031144">
    <property type="term" value="P:proteasome localization"/>
    <property type="evidence" value="ECO:0007669"/>
    <property type="project" value="InterPro"/>
</dbReference>
<dbReference type="GO" id="GO:0015031">
    <property type="term" value="P:protein transport"/>
    <property type="evidence" value="ECO:0007669"/>
    <property type="project" value="UniProtKB-KW"/>
</dbReference>
<dbReference type="FunFam" id="1.20.58.1590:FF:000003">
    <property type="entry name" value="Tethering factor for nuclear proteasome STS1"/>
    <property type="match status" value="1"/>
</dbReference>
<dbReference type="Gene3D" id="1.20.58.1590">
    <property type="entry name" value="Tethering factor for nuclear proteasome Cut8/Sts1"/>
    <property type="match status" value="1"/>
</dbReference>
<dbReference type="InterPro" id="IPR013868">
    <property type="entry name" value="Cut8/Sts1_fam"/>
</dbReference>
<dbReference type="InterPro" id="IPR038422">
    <property type="entry name" value="Cut8/Sts1_sf"/>
</dbReference>
<dbReference type="PANTHER" id="PTHR28032">
    <property type="entry name" value="FI02826P"/>
    <property type="match status" value="1"/>
</dbReference>
<dbReference type="PANTHER" id="PTHR28032:SF1">
    <property type="entry name" value="FI02826P"/>
    <property type="match status" value="1"/>
</dbReference>
<dbReference type="Pfam" id="PF08559">
    <property type="entry name" value="Cut8"/>
    <property type="match status" value="1"/>
</dbReference>
<protein>
    <recommendedName>
        <fullName>Tethering factor for nuclear proteasome STS1</fullName>
    </recommendedName>
    <alternativeName>
        <fullName>Dumbbell former protein 8</fullName>
    </alternativeName>
    <alternativeName>
        <fullName>SEC23 suppressor 1</fullName>
    </alternativeName>
</protein>
<comment type="function">
    <text evidence="1">Involved in ubiquitin-mediated protein degradation. Regulatory factor in the ubiquitin/proteasome pathway that controls the turnover of proteasome substrates. Targets proteasomes to the nucleus and facilitates the degradation of nuclear proteins (By similarity).</text>
</comment>
<comment type="subunit">
    <text evidence="1">Binds the proteasome. Interacts with karyopherin SRP1 and Proteasome subunit RPN11.</text>
</comment>
<comment type="subcellular location">
    <subcellularLocation>
        <location evidence="1">Cytoplasm</location>
    </subcellularLocation>
    <subcellularLocation>
        <location evidence="1">Nucleus</location>
    </subcellularLocation>
</comment>
<comment type="similarity">
    <text evidence="3">Belongs to the cut8/STS1 family.</text>
</comment>
<keyword id="KW-0963">Cytoplasm</keyword>
<keyword id="KW-0539">Nucleus</keyword>
<keyword id="KW-0653">Protein transport</keyword>
<keyword id="KW-0813">Transport</keyword>
<evidence type="ECO:0000250" key="1"/>
<evidence type="ECO:0000256" key="2">
    <source>
        <dbReference type="SAM" id="MobiDB-lite"/>
    </source>
</evidence>
<evidence type="ECO:0000305" key="3"/>
<proteinExistence type="inferred from homology"/>